<gene>
    <name type="primary">prp39</name>
    <name type="ORF">SPBC4B4.09</name>
</gene>
<evidence type="ECO:0000250" key="1"/>
<evidence type="ECO:0000305" key="2"/>
<proteinExistence type="inferred from homology"/>
<sequence length="612" mass="71247">MDYGDIYIAEETEWDKYNRQINKNPDDFDAWEGLVRASEHLEGGVGRNSSKQAINTLRSVYDRFLGKYPLLFGYWKKYADFEFFVAGAEASEHIYERGIAGIPHSVDLWTNYCAFKMETNGDANEVRELFMQGANMVGLDFLSHPFWDKYLEFEERQERPDNVFQLLERLIHIPLHQYARYFERFVQVSQSQPIQQLLPPDVLASIRADVTREPAKVVSAGSKQITVERGELEIEREMRARIYNIHLQIFQKVQLETAKRWTFESEIKRPYFHVKELDEAQLVNWRKYLDFEEVEGDFQRICHLYERCLITCALYDEFWFRYARWMSAQPDHLNDVSIIYERASCIFASISRPGIRVQYALFEESQGNIASAKAIYQSILTQLPGNLEAVLGWVGLERRNAPNYDLTNAHAVLRSIINEGKCNTGITEVLITEDIKLVWKIEGDIELARNMFLQNAPALLDCRHFWISFLRFELEQPLNSKNYTEHHARVSNVMEMIRNKTRLPPRTIMDLTKLYMEYLCHQSNDPSVLQEYLLIDRDVFGPFSVRESHWKKLDEGQDLKQVSTRLLSTNGHPGISVNEAKIKSGESPYEKYYRLQGVVETVTSGVAANGSS</sequence>
<dbReference type="EMBL" id="CU329671">
    <property type="protein sequence ID" value="CAA19289.1"/>
    <property type="molecule type" value="Genomic_DNA"/>
</dbReference>
<dbReference type="PIR" id="T40481">
    <property type="entry name" value="T40481"/>
</dbReference>
<dbReference type="RefSeq" id="NP_596426.1">
    <property type="nucleotide sequence ID" value="NM_001022345.2"/>
</dbReference>
<dbReference type="SMR" id="O74970"/>
<dbReference type="BioGRID" id="277386">
    <property type="interactions" value="14"/>
</dbReference>
<dbReference type="FunCoup" id="O74970">
    <property type="interactions" value="373"/>
</dbReference>
<dbReference type="STRING" id="284812.O74970"/>
<dbReference type="iPTMnet" id="O74970"/>
<dbReference type="PaxDb" id="4896-SPBC4B4.09.1"/>
<dbReference type="EnsemblFungi" id="SPBC4B4.09.1">
    <property type="protein sequence ID" value="SPBC4B4.09.1:pep"/>
    <property type="gene ID" value="SPBC4B4.09"/>
</dbReference>
<dbReference type="GeneID" id="2540869"/>
<dbReference type="KEGG" id="spo:2540869"/>
<dbReference type="PomBase" id="SPBC4B4.09"/>
<dbReference type="VEuPathDB" id="FungiDB:SPBC4B4.09"/>
<dbReference type="eggNOG" id="KOG1258">
    <property type="taxonomic scope" value="Eukaryota"/>
</dbReference>
<dbReference type="HOGENOM" id="CLU_007434_3_1_1"/>
<dbReference type="InParanoid" id="O74970"/>
<dbReference type="OMA" id="IISWANL"/>
<dbReference type="PhylomeDB" id="O74970"/>
<dbReference type="PRO" id="PR:O74970"/>
<dbReference type="Proteomes" id="UP000002485">
    <property type="component" value="Chromosome II"/>
</dbReference>
<dbReference type="GO" id="GO:0000243">
    <property type="term" value="C:commitment complex"/>
    <property type="evidence" value="ECO:0000318"/>
    <property type="project" value="GO_Central"/>
</dbReference>
<dbReference type="GO" id="GO:0005681">
    <property type="term" value="C:spliceosomal complex"/>
    <property type="evidence" value="ECO:0000314"/>
    <property type="project" value="PomBase"/>
</dbReference>
<dbReference type="GO" id="GO:0005685">
    <property type="term" value="C:U1 snRNP"/>
    <property type="evidence" value="ECO:0000314"/>
    <property type="project" value="PomBase"/>
</dbReference>
<dbReference type="GO" id="GO:0071004">
    <property type="term" value="C:U2-type prespliceosome"/>
    <property type="evidence" value="ECO:0000318"/>
    <property type="project" value="GO_Central"/>
</dbReference>
<dbReference type="GO" id="GO:0000395">
    <property type="term" value="P:mRNA 5'-splice site recognition"/>
    <property type="evidence" value="ECO:0000318"/>
    <property type="project" value="GO_Central"/>
</dbReference>
<dbReference type="GO" id="GO:0140727">
    <property type="term" value="P:siRNA-mediated pericentric heterochromatin formation"/>
    <property type="evidence" value="ECO:0000315"/>
    <property type="project" value="PomBase"/>
</dbReference>
<dbReference type="FunFam" id="1.25.40.10:FF:000451">
    <property type="entry name" value="mRNA splicing protein (Prp39), putative"/>
    <property type="match status" value="1"/>
</dbReference>
<dbReference type="FunFam" id="1.25.40.10:FF:000064">
    <property type="entry name" value="Putative pre-mrna-processing factor 39"/>
    <property type="match status" value="1"/>
</dbReference>
<dbReference type="Gene3D" id="1.25.40.10">
    <property type="entry name" value="Tetratricopeptide repeat domain"/>
    <property type="match status" value="2"/>
</dbReference>
<dbReference type="InterPro" id="IPR003107">
    <property type="entry name" value="HAT"/>
</dbReference>
<dbReference type="InterPro" id="IPR011990">
    <property type="entry name" value="TPR-like_helical_dom_sf"/>
</dbReference>
<dbReference type="PANTHER" id="PTHR17204">
    <property type="entry name" value="PRE-MRNA PROCESSING PROTEIN PRP39-RELATED"/>
    <property type="match status" value="1"/>
</dbReference>
<dbReference type="PANTHER" id="PTHR17204:SF5">
    <property type="entry name" value="PRE-MRNA-PROCESSING FACTOR 39"/>
    <property type="match status" value="1"/>
</dbReference>
<dbReference type="Pfam" id="PF23241">
    <property type="entry name" value="HAT_PRP39_C"/>
    <property type="match status" value="1"/>
</dbReference>
<dbReference type="Pfam" id="PF23240">
    <property type="entry name" value="HAT_PRP39_N"/>
    <property type="match status" value="1"/>
</dbReference>
<dbReference type="SMART" id="SM00386">
    <property type="entry name" value="HAT"/>
    <property type="match status" value="7"/>
</dbReference>
<dbReference type="SUPFAM" id="SSF48452">
    <property type="entry name" value="TPR-like"/>
    <property type="match status" value="1"/>
</dbReference>
<organism>
    <name type="scientific">Schizosaccharomyces pombe (strain 972 / ATCC 24843)</name>
    <name type="common">Fission yeast</name>
    <dbReference type="NCBI Taxonomy" id="284812"/>
    <lineage>
        <taxon>Eukaryota</taxon>
        <taxon>Fungi</taxon>
        <taxon>Dikarya</taxon>
        <taxon>Ascomycota</taxon>
        <taxon>Taphrinomycotina</taxon>
        <taxon>Schizosaccharomycetes</taxon>
        <taxon>Schizosaccharomycetales</taxon>
        <taxon>Schizosaccharomycetaceae</taxon>
        <taxon>Schizosaccharomyces</taxon>
    </lineage>
</organism>
<accession>O74970</accession>
<keyword id="KW-0507">mRNA processing</keyword>
<keyword id="KW-0508">mRNA splicing</keyword>
<keyword id="KW-0539">Nucleus</keyword>
<keyword id="KW-1185">Reference proteome</keyword>
<keyword id="KW-0677">Repeat</keyword>
<feature type="chain" id="PRO_0000205757" description="Pre-mRNA-processing factor 39">
    <location>
        <begin position="1"/>
        <end position="612"/>
    </location>
</feature>
<feature type="repeat" description="HAT 1">
    <location>
        <begin position="158"/>
        <end position="191"/>
    </location>
</feature>
<feature type="repeat" description="HAT 2">
    <location>
        <begin position="367"/>
        <end position="399"/>
    </location>
</feature>
<protein>
    <recommendedName>
        <fullName>Pre-mRNA-processing factor 39</fullName>
    </recommendedName>
</protein>
<reference key="1">
    <citation type="journal article" date="2002" name="Nature">
        <title>The genome sequence of Schizosaccharomyces pombe.</title>
        <authorList>
            <person name="Wood V."/>
            <person name="Gwilliam R."/>
            <person name="Rajandream M.A."/>
            <person name="Lyne M.H."/>
            <person name="Lyne R."/>
            <person name="Stewart A."/>
            <person name="Sgouros J.G."/>
            <person name="Peat N."/>
            <person name="Hayles J."/>
            <person name="Baker S.G."/>
            <person name="Basham D."/>
            <person name="Bowman S."/>
            <person name="Brooks K."/>
            <person name="Brown D."/>
            <person name="Brown S."/>
            <person name="Chillingworth T."/>
            <person name="Churcher C.M."/>
            <person name="Collins M."/>
            <person name="Connor R."/>
            <person name="Cronin A."/>
            <person name="Davis P."/>
            <person name="Feltwell T."/>
            <person name="Fraser A."/>
            <person name="Gentles S."/>
            <person name="Goble A."/>
            <person name="Hamlin N."/>
            <person name="Harris D.E."/>
            <person name="Hidalgo J."/>
            <person name="Hodgson G."/>
            <person name="Holroyd S."/>
            <person name="Hornsby T."/>
            <person name="Howarth S."/>
            <person name="Huckle E.J."/>
            <person name="Hunt S."/>
            <person name="Jagels K."/>
            <person name="James K.D."/>
            <person name="Jones L."/>
            <person name="Jones M."/>
            <person name="Leather S."/>
            <person name="McDonald S."/>
            <person name="McLean J."/>
            <person name="Mooney P."/>
            <person name="Moule S."/>
            <person name="Mungall K.L."/>
            <person name="Murphy L.D."/>
            <person name="Niblett D."/>
            <person name="Odell C."/>
            <person name="Oliver K."/>
            <person name="O'Neil S."/>
            <person name="Pearson D."/>
            <person name="Quail M.A."/>
            <person name="Rabbinowitsch E."/>
            <person name="Rutherford K.M."/>
            <person name="Rutter S."/>
            <person name="Saunders D."/>
            <person name="Seeger K."/>
            <person name="Sharp S."/>
            <person name="Skelton J."/>
            <person name="Simmonds M.N."/>
            <person name="Squares R."/>
            <person name="Squares S."/>
            <person name="Stevens K."/>
            <person name="Taylor K."/>
            <person name="Taylor R.G."/>
            <person name="Tivey A."/>
            <person name="Walsh S.V."/>
            <person name="Warren T."/>
            <person name="Whitehead S."/>
            <person name="Woodward J.R."/>
            <person name="Volckaert G."/>
            <person name="Aert R."/>
            <person name="Robben J."/>
            <person name="Grymonprez B."/>
            <person name="Weltjens I."/>
            <person name="Vanstreels E."/>
            <person name="Rieger M."/>
            <person name="Schaefer M."/>
            <person name="Mueller-Auer S."/>
            <person name="Gabel C."/>
            <person name="Fuchs M."/>
            <person name="Duesterhoeft A."/>
            <person name="Fritzc C."/>
            <person name="Holzer E."/>
            <person name="Moestl D."/>
            <person name="Hilbert H."/>
            <person name="Borzym K."/>
            <person name="Langer I."/>
            <person name="Beck A."/>
            <person name="Lehrach H."/>
            <person name="Reinhardt R."/>
            <person name="Pohl T.M."/>
            <person name="Eger P."/>
            <person name="Zimmermann W."/>
            <person name="Wedler H."/>
            <person name="Wambutt R."/>
            <person name="Purnelle B."/>
            <person name="Goffeau A."/>
            <person name="Cadieu E."/>
            <person name="Dreano S."/>
            <person name="Gloux S."/>
            <person name="Lelaure V."/>
            <person name="Mottier S."/>
            <person name="Galibert F."/>
            <person name="Aves S.J."/>
            <person name="Xiang Z."/>
            <person name="Hunt C."/>
            <person name="Moore K."/>
            <person name="Hurst S.M."/>
            <person name="Lucas M."/>
            <person name="Rochet M."/>
            <person name="Gaillardin C."/>
            <person name="Tallada V.A."/>
            <person name="Garzon A."/>
            <person name="Thode G."/>
            <person name="Daga R.R."/>
            <person name="Cruzado L."/>
            <person name="Jimenez J."/>
            <person name="Sanchez M."/>
            <person name="del Rey F."/>
            <person name="Benito J."/>
            <person name="Dominguez A."/>
            <person name="Revuelta J.L."/>
            <person name="Moreno S."/>
            <person name="Armstrong J."/>
            <person name="Forsburg S.L."/>
            <person name="Cerutti L."/>
            <person name="Lowe T."/>
            <person name="McCombie W.R."/>
            <person name="Paulsen I."/>
            <person name="Potashkin J."/>
            <person name="Shpakovski G.V."/>
            <person name="Ussery D."/>
            <person name="Barrell B.G."/>
            <person name="Nurse P."/>
        </authorList>
    </citation>
    <scope>NUCLEOTIDE SEQUENCE [LARGE SCALE GENOMIC DNA]</scope>
    <source>
        <strain>972 / ATCC 24843</strain>
    </source>
</reference>
<comment type="function">
    <text evidence="1">Function prior to stable branch point recognition by the U1 snRNP particle to facilitate or stabilize the U1 snRNP/5'-splice site interaction. Has a direct role in the assembly or function of a catalytically active spliceosome (By similarity).</text>
</comment>
<comment type="subcellular location">
    <subcellularLocation>
        <location evidence="1">Nucleus</location>
    </subcellularLocation>
</comment>
<comment type="similarity">
    <text evidence="2">Belongs to the PRP39 family.</text>
</comment>
<name>PRP39_SCHPO</name>